<comment type="function">
    <text evidence="1">Involved in mRNA degradation. Catalyzes the phosphorolysis of single-stranded polyribonucleotides processively in the 3'- to 5'-direction.</text>
</comment>
<comment type="catalytic activity">
    <reaction evidence="1">
        <text>RNA(n+1) + phosphate = RNA(n) + a ribonucleoside 5'-diphosphate</text>
        <dbReference type="Rhea" id="RHEA:22096"/>
        <dbReference type="Rhea" id="RHEA-COMP:14527"/>
        <dbReference type="Rhea" id="RHEA-COMP:17342"/>
        <dbReference type="ChEBI" id="CHEBI:43474"/>
        <dbReference type="ChEBI" id="CHEBI:57930"/>
        <dbReference type="ChEBI" id="CHEBI:140395"/>
        <dbReference type="EC" id="2.7.7.8"/>
    </reaction>
</comment>
<comment type="cofactor">
    <cofactor evidence="1">
        <name>Mg(2+)</name>
        <dbReference type="ChEBI" id="CHEBI:18420"/>
    </cofactor>
</comment>
<comment type="subcellular location">
    <subcellularLocation>
        <location evidence="1">Cytoplasm</location>
    </subcellularLocation>
</comment>
<comment type="similarity">
    <text evidence="1">Belongs to the polyribonucleotide nucleotidyltransferase family.</text>
</comment>
<reference key="1">
    <citation type="submission" date="2008-02" db="EMBL/GenBank/DDBJ databases">
        <title>Complete sequence of Synechococcus sp. PCC 7002.</title>
        <authorList>
            <person name="Li T."/>
            <person name="Zhao J."/>
            <person name="Zhao C."/>
            <person name="Liu Z."/>
            <person name="Zhao F."/>
            <person name="Marquardt J."/>
            <person name="Nomura C.T."/>
            <person name="Persson S."/>
            <person name="Detter J.C."/>
            <person name="Richardson P.M."/>
            <person name="Lanz C."/>
            <person name="Schuster S.C."/>
            <person name="Wang J."/>
            <person name="Li S."/>
            <person name="Huang X."/>
            <person name="Cai T."/>
            <person name="Yu Z."/>
            <person name="Luo J."/>
            <person name="Zhao J."/>
            <person name="Bryant D.A."/>
        </authorList>
    </citation>
    <scope>NUCLEOTIDE SEQUENCE [LARGE SCALE GENOMIC DNA]</scope>
    <source>
        <strain>ATCC 27264 / PCC 7002 / PR-6</strain>
    </source>
</reference>
<evidence type="ECO:0000255" key="1">
    <source>
        <dbReference type="HAMAP-Rule" id="MF_01595"/>
    </source>
</evidence>
<sequence>MQEHIQSISFDGREIRLKTGLFAPQAGGSVLIESGDTAVLVSATTAPGRQGIDFLPLLVDYEERLYAAGRIPGGYLRREGRPPERATLISRLIDRPMRPLFPQWLRDDIQIVATTLSLDEEVPPDVLAVTGASVATLLAGLPFYGPMAAVRVGLVGDDFILNPTYREMMNGDLDLVVAGTPDGVIMVEAGANQLPEADMIEAIDFAYEAIQELIEAQRALMKELGVEMVSAEPPAKDEELEKFIGDRTTDKIKKVLSQFDLDKNGRDAALDEIKATEIIEAIEALPEDAPLRLKTTEEPKLIDNTFKALTKKLMRSQIVEDGVRVDGRKLDQVRPISCRTAVLPRAVHGSGLFNRGLTQVLSIATLGTPGDAQEMDDLHPSDEKRYLHHYNFPPYSVGETRPMRSPGRREIGHGALAERALLPVLPPKDEFPYVIRVVSEVLSSNGSTSMGSVCGSTLALMDAGVPIAKPVSGAAMGLIKEGKEVRILTDIQGIEDFLGDMDFKVAGTADGITALQMDMKITGLAVEVVAEAIKQALPARLHILEKMTDVIAEPKELSPAAPRLLTIKIDPDLIGMVIGPGGKTIKGITEQTRAKVDIADDGTVTIASSESENAEKAKRLIVNMTRKLNEGDVYFGKVTRIIQIGAFVEIMPGKEGMIHISQLAEGRVGKVEDEVAVGDEVVVKVREIDNKGRINLTRLGIHPDEAAAARVAAQ</sequence>
<proteinExistence type="inferred from homology"/>
<name>PNP_PICP2</name>
<accession>B1XJU0</accession>
<keyword id="KW-0963">Cytoplasm</keyword>
<keyword id="KW-0460">Magnesium</keyword>
<keyword id="KW-0479">Metal-binding</keyword>
<keyword id="KW-0548">Nucleotidyltransferase</keyword>
<keyword id="KW-1185">Reference proteome</keyword>
<keyword id="KW-0694">RNA-binding</keyword>
<keyword id="KW-0808">Transferase</keyword>
<gene>
    <name evidence="1" type="primary">pnp</name>
    <name type="ordered locus">SYNPCC7002_A1066</name>
</gene>
<organism>
    <name type="scientific">Picosynechococcus sp. (strain ATCC 27264 / PCC 7002 / PR-6)</name>
    <name type="common">Agmenellum quadruplicatum</name>
    <dbReference type="NCBI Taxonomy" id="32049"/>
    <lineage>
        <taxon>Bacteria</taxon>
        <taxon>Bacillati</taxon>
        <taxon>Cyanobacteriota</taxon>
        <taxon>Cyanophyceae</taxon>
        <taxon>Oscillatoriophycideae</taxon>
        <taxon>Chroococcales</taxon>
        <taxon>Geminocystaceae</taxon>
        <taxon>Picosynechococcus</taxon>
    </lineage>
</organism>
<feature type="chain" id="PRO_1000192500" description="Polyribonucleotide nucleotidyltransferase">
    <location>
        <begin position="1"/>
        <end position="714"/>
    </location>
</feature>
<feature type="domain" description="KH" evidence="1">
    <location>
        <begin position="562"/>
        <end position="621"/>
    </location>
</feature>
<feature type="domain" description="S1 motif" evidence="1">
    <location>
        <begin position="631"/>
        <end position="699"/>
    </location>
</feature>
<feature type="binding site" evidence="1">
    <location>
        <position position="496"/>
    </location>
    <ligand>
        <name>Mg(2+)</name>
        <dbReference type="ChEBI" id="CHEBI:18420"/>
    </ligand>
</feature>
<feature type="binding site" evidence="1">
    <location>
        <position position="502"/>
    </location>
    <ligand>
        <name>Mg(2+)</name>
        <dbReference type="ChEBI" id="CHEBI:18420"/>
    </ligand>
</feature>
<dbReference type="EC" id="2.7.7.8" evidence="1"/>
<dbReference type="EMBL" id="CP000951">
    <property type="protein sequence ID" value="ACA99068.1"/>
    <property type="molecule type" value="Genomic_DNA"/>
</dbReference>
<dbReference type="RefSeq" id="WP_012306691.1">
    <property type="nucleotide sequence ID" value="NZ_JAHHPU010000001.1"/>
</dbReference>
<dbReference type="SMR" id="B1XJU0"/>
<dbReference type="STRING" id="32049.SYNPCC7002_A1066"/>
<dbReference type="KEGG" id="syp:SYNPCC7002_A1066"/>
<dbReference type="eggNOG" id="COG1185">
    <property type="taxonomic scope" value="Bacteria"/>
</dbReference>
<dbReference type="HOGENOM" id="CLU_004217_2_2_3"/>
<dbReference type="Proteomes" id="UP000001688">
    <property type="component" value="Chromosome"/>
</dbReference>
<dbReference type="GO" id="GO:0005829">
    <property type="term" value="C:cytosol"/>
    <property type="evidence" value="ECO:0007669"/>
    <property type="project" value="TreeGrafter"/>
</dbReference>
<dbReference type="GO" id="GO:0000175">
    <property type="term" value="F:3'-5'-RNA exonuclease activity"/>
    <property type="evidence" value="ECO:0007669"/>
    <property type="project" value="TreeGrafter"/>
</dbReference>
<dbReference type="GO" id="GO:0000287">
    <property type="term" value="F:magnesium ion binding"/>
    <property type="evidence" value="ECO:0007669"/>
    <property type="project" value="UniProtKB-UniRule"/>
</dbReference>
<dbReference type="GO" id="GO:0004654">
    <property type="term" value="F:polyribonucleotide nucleotidyltransferase activity"/>
    <property type="evidence" value="ECO:0007669"/>
    <property type="project" value="UniProtKB-UniRule"/>
</dbReference>
<dbReference type="GO" id="GO:0003723">
    <property type="term" value="F:RNA binding"/>
    <property type="evidence" value="ECO:0007669"/>
    <property type="project" value="UniProtKB-UniRule"/>
</dbReference>
<dbReference type="GO" id="GO:0006402">
    <property type="term" value="P:mRNA catabolic process"/>
    <property type="evidence" value="ECO:0007669"/>
    <property type="project" value="UniProtKB-UniRule"/>
</dbReference>
<dbReference type="GO" id="GO:0006396">
    <property type="term" value="P:RNA processing"/>
    <property type="evidence" value="ECO:0007669"/>
    <property type="project" value="InterPro"/>
</dbReference>
<dbReference type="CDD" id="cd02393">
    <property type="entry name" value="KH-I_PNPase"/>
    <property type="match status" value="1"/>
</dbReference>
<dbReference type="CDD" id="cd11363">
    <property type="entry name" value="RNase_PH_PNPase_1"/>
    <property type="match status" value="1"/>
</dbReference>
<dbReference type="CDD" id="cd11364">
    <property type="entry name" value="RNase_PH_PNPase_2"/>
    <property type="match status" value="1"/>
</dbReference>
<dbReference type="CDD" id="cd04472">
    <property type="entry name" value="S1_PNPase"/>
    <property type="match status" value="1"/>
</dbReference>
<dbReference type="FunFam" id="2.40.50.140:FF:000023">
    <property type="entry name" value="Polyribonucleotide nucleotidyltransferase"/>
    <property type="match status" value="1"/>
</dbReference>
<dbReference type="FunFam" id="3.30.1370.10:FF:000001">
    <property type="entry name" value="Polyribonucleotide nucleotidyltransferase"/>
    <property type="match status" value="1"/>
</dbReference>
<dbReference type="FunFam" id="3.30.230.70:FF:000001">
    <property type="entry name" value="Polyribonucleotide nucleotidyltransferase"/>
    <property type="match status" value="1"/>
</dbReference>
<dbReference type="FunFam" id="3.30.230.70:FF:000002">
    <property type="entry name" value="Polyribonucleotide nucleotidyltransferase"/>
    <property type="match status" value="1"/>
</dbReference>
<dbReference type="Gene3D" id="3.30.230.70">
    <property type="entry name" value="GHMP Kinase, N-terminal domain"/>
    <property type="match status" value="2"/>
</dbReference>
<dbReference type="Gene3D" id="3.30.1370.10">
    <property type="entry name" value="K Homology domain, type 1"/>
    <property type="match status" value="1"/>
</dbReference>
<dbReference type="Gene3D" id="2.40.50.140">
    <property type="entry name" value="Nucleic acid-binding proteins"/>
    <property type="match status" value="1"/>
</dbReference>
<dbReference type="HAMAP" id="MF_01595">
    <property type="entry name" value="PNPase"/>
    <property type="match status" value="1"/>
</dbReference>
<dbReference type="InterPro" id="IPR001247">
    <property type="entry name" value="ExoRNase_PH_dom1"/>
</dbReference>
<dbReference type="InterPro" id="IPR015847">
    <property type="entry name" value="ExoRNase_PH_dom2"/>
</dbReference>
<dbReference type="InterPro" id="IPR036345">
    <property type="entry name" value="ExoRNase_PH_dom2_sf"/>
</dbReference>
<dbReference type="InterPro" id="IPR004087">
    <property type="entry name" value="KH_dom"/>
</dbReference>
<dbReference type="InterPro" id="IPR004088">
    <property type="entry name" value="KH_dom_type_1"/>
</dbReference>
<dbReference type="InterPro" id="IPR036612">
    <property type="entry name" value="KH_dom_type_1_sf"/>
</dbReference>
<dbReference type="InterPro" id="IPR012340">
    <property type="entry name" value="NA-bd_OB-fold"/>
</dbReference>
<dbReference type="InterPro" id="IPR012162">
    <property type="entry name" value="PNPase"/>
</dbReference>
<dbReference type="InterPro" id="IPR027408">
    <property type="entry name" value="PNPase/RNase_PH_dom_sf"/>
</dbReference>
<dbReference type="InterPro" id="IPR015848">
    <property type="entry name" value="PNPase_PH_RNA-bd_bac/org-type"/>
</dbReference>
<dbReference type="InterPro" id="IPR020568">
    <property type="entry name" value="Ribosomal_Su5_D2-typ_SF"/>
</dbReference>
<dbReference type="InterPro" id="IPR003029">
    <property type="entry name" value="S1_domain"/>
</dbReference>
<dbReference type="NCBIfam" id="TIGR03591">
    <property type="entry name" value="polynuc_phos"/>
    <property type="match status" value="1"/>
</dbReference>
<dbReference type="NCBIfam" id="NF008805">
    <property type="entry name" value="PRK11824.1"/>
    <property type="match status" value="1"/>
</dbReference>
<dbReference type="PANTHER" id="PTHR11252">
    <property type="entry name" value="POLYRIBONUCLEOTIDE NUCLEOTIDYLTRANSFERASE"/>
    <property type="match status" value="1"/>
</dbReference>
<dbReference type="PANTHER" id="PTHR11252:SF0">
    <property type="entry name" value="POLYRIBONUCLEOTIDE NUCLEOTIDYLTRANSFERASE 1, MITOCHONDRIAL"/>
    <property type="match status" value="1"/>
</dbReference>
<dbReference type="Pfam" id="PF00013">
    <property type="entry name" value="KH_1"/>
    <property type="match status" value="1"/>
</dbReference>
<dbReference type="Pfam" id="PF03726">
    <property type="entry name" value="PNPase"/>
    <property type="match status" value="1"/>
</dbReference>
<dbReference type="Pfam" id="PF01138">
    <property type="entry name" value="RNase_PH"/>
    <property type="match status" value="2"/>
</dbReference>
<dbReference type="Pfam" id="PF03725">
    <property type="entry name" value="RNase_PH_C"/>
    <property type="match status" value="1"/>
</dbReference>
<dbReference type="Pfam" id="PF00575">
    <property type="entry name" value="S1"/>
    <property type="match status" value="1"/>
</dbReference>
<dbReference type="PIRSF" id="PIRSF005499">
    <property type="entry name" value="PNPase"/>
    <property type="match status" value="1"/>
</dbReference>
<dbReference type="SMART" id="SM00322">
    <property type="entry name" value="KH"/>
    <property type="match status" value="1"/>
</dbReference>
<dbReference type="SMART" id="SM00316">
    <property type="entry name" value="S1"/>
    <property type="match status" value="1"/>
</dbReference>
<dbReference type="SUPFAM" id="SSF54791">
    <property type="entry name" value="Eukaryotic type KH-domain (KH-domain type I)"/>
    <property type="match status" value="1"/>
</dbReference>
<dbReference type="SUPFAM" id="SSF50249">
    <property type="entry name" value="Nucleic acid-binding proteins"/>
    <property type="match status" value="1"/>
</dbReference>
<dbReference type="SUPFAM" id="SSF55666">
    <property type="entry name" value="Ribonuclease PH domain 2-like"/>
    <property type="match status" value="2"/>
</dbReference>
<dbReference type="SUPFAM" id="SSF54211">
    <property type="entry name" value="Ribosomal protein S5 domain 2-like"/>
    <property type="match status" value="2"/>
</dbReference>
<dbReference type="PROSITE" id="PS50084">
    <property type="entry name" value="KH_TYPE_1"/>
    <property type="match status" value="1"/>
</dbReference>
<dbReference type="PROSITE" id="PS50126">
    <property type="entry name" value="S1"/>
    <property type="match status" value="1"/>
</dbReference>
<protein>
    <recommendedName>
        <fullName evidence="1">Polyribonucleotide nucleotidyltransferase</fullName>
        <ecNumber evidence="1">2.7.7.8</ecNumber>
    </recommendedName>
    <alternativeName>
        <fullName evidence="1">Polynucleotide phosphorylase</fullName>
        <shortName evidence="1">PNPase</shortName>
    </alternativeName>
</protein>